<feature type="chain" id="PRO_0000258226" description="Large ribosomal subunit protein uL11">
    <location>
        <begin position="1"/>
        <end position="141"/>
    </location>
</feature>
<gene>
    <name evidence="1" type="primary">rplK</name>
    <name type="ordered locus">stu1818</name>
</gene>
<reference key="1">
    <citation type="journal article" date="2004" name="Nat. Biotechnol.">
        <title>Complete sequence and comparative genome analysis of the dairy bacterium Streptococcus thermophilus.</title>
        <authorList>
            <person name="Bolotin A."/>
            <person name="Quinquis B."/>
            <person name="Renault P."/>
            <person name="Sorokin A."/>
            <person name="Ehrlich S.D."/>
            <person name="Kulakauskas S."/>
            <person name="Lapidus A."/>
            <person name="Goltsman E."/>
            <person name="Mazur M."/>
            <person name="Pusch G.D."/>
            <person name="Fonstein M."/>
            <person name="Overbeek R."/>
            <person name="Kyprides N."/>
            <person name="Purnelle B."/>
            <person name="Prozzi D."/>
            <person name="Ngui K."/>
            <person name="Masuy D."/>
            <person name="Hancy F."/>
            <person name="Burteau S."/>
            <person name="Boutry M."/>
            <person name="Delcour J."/>
            <person name="Goffeau A."/>
            <person name="Hols P."/>
        </authorList>
    </citation>
    <scope>NUCLEOTIDE SEQUENCE [LARGE SCALE GENOMIC DNA]</scope>
    <source>
        <strain>ATCC BAA-250 / LMG 18311</strain>
    </source>
</reference>
<organism>
    <name type="scientific">Streptococcus thermophilus (strain ATCC BAA-250 / LMG 18311)</name>
    <dbReference type="NCBI Taxonomy" id="264199"/>
    <lineage>
        <taxon>Bacteria</taxon>
        <taxon>Bacillati</taxon>
        <taxon>Bacillota</taxon>
        <taxon>Bacilli</taxon>
        <taxon>Lactobacillales</taxon>
        <taxon>Streptococcaceae</taxon>
        <taxon>Streptococcus</taxon>
    </lineage>
</organism>
<comment type="function">
    <text evidence="1">Forms part of the ribosomal stalk which helps the ribosome interact with GTP-bound translation factors.</text>
</comment>
<comment type="subunit">
    <text evidence="1">Part of the ribosomal stalk of the 50S ribosomal subunit. Interacts with L10 and the large rRNA to form the base of the stalk. L10 forms an elongated spine to which L12 dimers bind in a sequential fashion forming a multimeric L10(L12)X complex.</text>
</comment>
<comment type="PTM">
    <text evidence="1">One or more lysine residues are methylated.</text>
</comment>
<comment type="similarity">
    <text evidence="1">Belongs to the universal ribosomal protein uL11 family.</text>
</comment>
<dbReference type="EMBL" id="CP000023">
    <property type="protein sequence ID" value="AAV61417.1"/>
    <property type="molecule type" value="Genomic_DNA"/>
</dbReference>
<dbReference type="RefSeq" id="WP_002953535.1">
    <property type="nucleotide sequence ID" value="NC_006448.1"/>
</dbReference>
<dbReference type="SMR" id="Q5M2J9"/>
<dbReference type="STRING" id="264199.stu1818"/>
<dbReference type="GeneID" id="66899554"/>
<dbReference type="KEGG" id="stl:stu1818"/>
<dbReference type="eggNOG" id="COG0080">
    <property type="taxonomic scope" value="Bacteria"/>
</dbReference>
<dbReference type="HOGENOM" id="CLU_074237_2_1_9"/>
<dbReference type="Proteomes" id="UP000001170">
    <property type="component" value="Chromosome"/>
</dbReference>
<dbReference type="GO" id="GO:0022625">
    <property type="term" value="C:cytosolic large ribosomal subunit"/>
    <property type="evidence" value="ECO:0007669"/>
    <property type="project" value="TreeGrafter"/>
</dbReference>
<dbReference type="GO" id="GO:0070180">
    <property type="term" value="F:large ribosomal subunit rRNA binding"/>
    <property type="evidence" value="ECO:0007669"/>
    <property type="project" value="UniProtKB-UniRule"/>
</dbReference>
<dbReference type="GO" id="GO:0003735">
    <property type="term" value="F:structural constituent of ribosome"/>
    <property type="evidence" value="ECO:0007669"/>
    <property type="project" value="InterPro"/>
</dbReference>
<dbReference type="GO" id="GO:0006412">
    <property type="term" value="P:translation"/>
    <property type="evidence" value="ECO:0007669"/>
    <property type="project" value="UniProtKB-UniRule"/>
</dbReference>
<dbReference type="CDD" id="cd00349">
    <property type="entry name" value="Ribosomal_L11"/>
    <property type="match status" value="1"/>
</dbReference>
<dbReference type="FunFam" id="1.10.10.250:FF:000001">
    <property type="entry name" value="50S ribosomal protein L11"/>
    <property type="match status" value="1"/>
</dbReference>
<dbReference type="FunFam" id="3.30.1550.10:FF:000001">
    <property type="entry name" value="50S ribosomal protein L11"/>
    <property type="match status" value="1"/>
</dbReference>
<dbReference type="Gene3D" id="1.10.10.250">
    <property type="entry name" value="Ribosomal protein L11, C-terminal domain"/>
    <property type="match status" value="1"/>
</dbReference>
<dbReference type="Gene3D" id="3.30.1550.10">
    <property type="entry name" value="Ribosomal protein L11/L12, N-terminal domain"/>
    <property type="match status" value="1"/>
</dbReference>
<dbReference type="HAMAP" id="MF_00736">
    <property type="entry name" value="Ribosomal_uL11"/>
    <property type="match status" value="1"/>
</dbReference>
<dbReference type="InterPro" id="IPR000911">
    <property type="entry name" value="Ribosomal_uL11"/>
</dbReference>
<dbReference type="InterPro" id="IPR006519">
    <property type="entry name" value="Ribosomal_uL11_bac-typ"/>
</dbReference>
<dbReference type="InterPro" id="IPR020783">
    <property type="entry name" value="Ribosomal_uL11_C"/>
</dbReference>
<dbReference type="InterPro" id="IPR036769">
    <property type="entry name" value="Ribosomal_uL11_C_sf"/>
</dbReference>
<dbReference type="InterPro" id="IPR020785">
    <property type="entry name" value="Ribosomal_uL11_CS"/>
</dbReference>
<dbReference type="InterPro" id="IPR020784">
    <property type="entry name" value="Ribosomal_uL11_N"/>
</dbReference>
<dbReference type="InterPro" id="IPR036796">
    <property type="entry name" value="Ribosomal_uL11_N_sf"/>
</dbReference>
<dbReference type="NCBIfam" id="TIGR01632">
    <property type="entry name" value="L11_bact"/>
    <property type="match status" value="1"/>
</dbReference>
<dbReference type="PANTHER" id="PTHR11661">
    <property type="entry name" value="60S RIBOSOMAL PROTEIN L12"/>
    <property type="match status" value="1"/>
</dbReference>
<dbReference type="PANTHER" id="PTHR11661:SF1">
    <property type="entry name" value="LARGE RIBOSOMAL SUBUNIT PROTEIN UL11M"/>
    <property type="match status" value="1"/>
</dbReference>
<dbReference type="Pfam" id="PF00298">
    <property type="entry name" value="Ribosomal_L11"/>
    <property type="match status" value="1"/>
</dbReference>
<dbReference type="Pfam" id="PF03946">
    <property type="entry name" value="Ribosomal_L11_N"/>
    <property type="match status" value="1"/>
</dbReference>
<dbReference type="SMART" id="SM00649">
    <property type="entry name" value="RL11"/>
    <property type="match status" value="1"/>
</dbReference>
<dbReference type="SUPFAM" id="SSF54747">
    <property type="entry name" value="Ribosomal L11/L12e N-terminal domain"/>
    <property type="match status" value="1"/>
</dbReference>
<dbReference type="SUPFAM" id="SSF46906">
    <property type="entry name" value="Ribosomal protein L11, C-terminal domain"/>
    <property type="match status" value="1"/>
</dbReference>
<dbReference type="PROSITE" id="PS00359">
    <property type="entry name" value="RIBOSOMAL_L11"/>
    <property type="match status" value="1"/>
</dbReference>
<protein>
    <recommendedName>
        <fullName evidence="1">Large ribosomal subunit protein uL11</fullName>
    </recommendedName>
    <alternativeName>
        <fullName evidence="2">50S ribosomal protein L11</fullName>
    </alternativeName>
</protein>
<sequence length="141" mass="14801">MAKKVENIVKLQIPAGKATPAPPVGPALGQAGINIMGFTKEFNARTADQAGMIIPVVISVYEDKSFDFITKTPPAAVLLKKAAGVEKGSGTPNSVKVASVTRAQVREIAETKMPDLNAANIESAMRMIEGTARSMGFTVTD</sequence>
<name>RL11_STRT2</name>
<evidence type="ECO:0000255" key="1">
    <source>
        <dbReference type="HAMAP-Rule" id="MF_00736"/>
    </source>
</evidence>
<evidence type="ECO:0000305" key="2"/>
<proteinExistence type="inferred from homology"/>
<accession>Q5M2J9</accession>
<keyword id="KW-0488">Methylation</keyword>
<keyword id="KW-1185">Reference proteome</keyword>
<keyword id="KW-0687">Ribonucleoprotein</keyword>
<keyword id="KW-0689">Ribosomal protein</keyword>
<keyword id="KW-0694">RNA-binding</keyword>
<keyword id="KW-0699">rRNA-binding</keyword>